<proteinExistence type="inferred from homology"/>
<name>THIO_MYCPU</name>
<gene>
    <name type="primary">trxA</name>
    <name type="ordered locus">MYPU_7070</name>
</gene>
<keyword id="KW-1015">Disulfide bond</keyword>
<keyword id="KW-0249">Electron transport</keyword>
<keyword id="KW-0676">Redox-active center</keyword>
<keyword id="KW-1185">Reference proteome</keyword>
<keyword id="KW-0813">Transport</keyword>
<protein>
    <recommendedName>
        <fullName>Thioredoxin</fullName>
        <shortName>Trx</shortName>
    </recommendedName>
</protein>
<sequence length="109" mass="12786">METLLWKDAREKIKKGVNFVEFAAPWCPDCVMMKPVIEQVEQEIKNLNLPVNFYHVNADESGMFRKADAEVAVLRIPTHYIVKDGKQVFIGYEYFPKHILVEKIKELFK</sequence>
<organism>
    <name type="scientific">Mycoplasmopsis pulmonis (strain UAB CTIP)</name>
    <name type="common">Mycoplasma pulmonis</name>
    <dbReference type="NCBI Taxonomy" id="272635"/>
    <lineage>
        <taxon>Bacteria</taxon>
        <taxon>Bacillati</taxon>
        <taxon>Mycoplasmatota</taxon>
        <taxon>Mycoplasmoidales</taxon>
        <taxon>Metamycoplasmataceae</taxon>
        <taxon>Mycoplasmopsis</taxon>
    </lineage>
</organism>
<dbReference type="EMBL" id="AL445565">
    <property type="protein sequence ID" value="CAC13880.1"/>
    <property type="molecule type" value="Genomic_DNA"/>
</dbReference>
<dbReference type="PIR" id="C90600">
    <property type="entry name" value="C90600"/>
</dbReference>
<dbReference type="RefSeq" id="WP_010925508.1">
    <property type="nucleotide sequence ID" value="NC_002771.1"/>
</dbReference>
<dbReference type="SMR" id="Q98PL5"/>
<dbReference type="STRING" id="272635.gene:17577318"/>
<dbReference type="KEGG" id="mpu:MYPU_7070"/>
<dbReference type="HOGENOM" id="CLU_090389_10_4_14"/>
<dbReference type="BioCyc" id="MPUL272635:G1GT6-720-MONOMER"/>
<dbReference type="Proteomes" id="UP000000528">
    <property type="component" value="Chromosome"/>
</dbReference>
<dbReference type="CDD" id="cd02947">
    <property type="entry name" value="TRX_family"/>
    <property type="match status" value="1"/>
</dbReference>
<dbReference type="Gene3D" id="3.40.30.10">
    <property type="entry name" value="Glutaredoxin"/>
    <property type="match status" value="1"/>
</dbReference>
<dbReference type="InterPro" id="IPR036249">
    <property type="entry name" value="Thioredoxin-like_sf"/>
</dbReference>
<dbReference type="InterPro" id="IPR013766">
    <property type="entry name" value="Thioredoxin_domain"/>
</dbReference>
<dbReference type="Pfam" id="PF00085">
    <property type="entry name" value="Thioredoxin"/>
    <property type="match status" value="1"/>
</dbReference>
<dbReference type="SUPFAM" id="SSF52833">
    <property type="entry name" value="Thioredoxin-like"/>
    <property type="match status" value="1"/>
</dbReference>
<dbReference type="PROSITE" id="PS51352">
    <property type="entry name" value="THIOREDOXIN_2"/>
    <property type="match status" value="1"/>
</dbReference>
<reference key="1">
    <citation type="journal article" date="2001" name="Nucleic Acids Res.">
        <title>The complete genome sequence of the murine respiratory pathogen Mycoplasma pulmonis.</title>
        <authorList>
            <person name="Chambaud I."/>
            <person name="Heilig R."/>
            <person name="Ferris S."/>
            <person name="Barbe V."/>
            <person name="Samson D."/>
            <person name="Galisson F."/>
            <person name="Moszer I."/>
            <person name="Dybvig K."/>
            <person name="Wroblewski H."/>
            <person name="Viari A."/>
            <person name="Rocha E.P.C."/>
            <person name="Blanchard A."/>
        </authorList>
    </citation>
    <scope>NUCLEOTIDE SEQUENCE [LARGE SCALE GENOMIC DNA]</scope>
    <source>
        <strain>UAB CTIP</strain>
    </source>
</reference>
<evidence type="ECO:0000250" key="1"/>
<evidence type="ECO:0000255" key="2">
    <source>
        <dbReference type="PROSITE-ProRule" id="PRU00691"/>
    </source>
</evidence>
<evidence type="ECO:0000305" key="3"/>
<feature type="chain" id="PRO_0000120115" description="Thioredoxin">
    <location>
        <begin position="1"/>
        <end position="109"/>
    </location>
</feature>
<feature type="domain" description="Thioredoxin" evidence="2">
    <location>
        <begin position="2"/>
        <end position="109"/>
    </location>
</feature>
<feature type="disulfide bond" description="Redox-active" evidence="2">
    <location>
        <begin position="27"/>
        <end position="30"/>
    </location>
</feature>
<accession>Q98PL5</accession>
<comment type="function">
    <text evidence="1">Participates in various redox reactions through the reversible oxidation of its active center dithiol to a disulfide and catalyzes dithiol-disulfide exchange reactions.</text>
</comment>
<comment type="similarity">
    <text evidence="3">Belongs to the thioredoxin family.</text>
</comment>